<feature type="signal peptide" evidence="3">
    <location>
        <begin position="1"/>
        <end position="23"/>
    </location>
</feature>
<feature type="chain" id="PRO_0000011963" description="Di-N-acetylchitobiase">
    <location>
        <begin position="24"/>
        <end position="367"/>
    </location>
</feature>
<feature type="domain" description="GH18" evidence="2">
    <location>
        <begin position="24"/>
        <end position="367"/>
    </location>
</feature>
<feature type="active site" description="Proton donor" evidence="2">
    <location>
        <position position="128"/>
    </location>
</feature>
<feature type="glycosylation site" description="N-linked (GlcNAc...) asparagine" evidence="1">
    <location>
        <position position="178"/>
    </location>
</feature>
<feature type="glycosylation site" description="N-linked (GlcNAc...) asparagine" evidence="1">
    <location>
        <position position="213"/>
    </location>
</feature>
<feature type="glycosylation site" description="N-linked (GlcNAc...) asparagine" evidence="1">
    <location>
        <position position="247"/>
    </location>
</feature>
<feature type="glycosylation site" description="N-linked (GlcNAc...) asparagine" evidence="1">
    <location>
        <position position="284"/>
    </location>
</feature>
<dbReference type="EC" id="3.2.1.-"/>
<dbReference type="EMBL" id="M95768">
    <property type="protein sequence ID" value="AAA40924.1"/>
    <property type="molecule type" value="mRNA"/>
</dbReference>
<dbReference type="EMBL" id="BC088129">
    <property type="protein sequence ID" value="AAH88129.1"/>
    <property type="molecule type" value="mRNA"/>
</dbReference>
<dbReference type="PIR" id="C44102">
    <property type="entry name" value="C44102"/>
</dbReference>
<dbReference type="RefSeq" id="NP_112285.1">
    <property type="nucleotide sequence ID" value="NM_031023.1"/>
</dbReference>
<dbReference type="SMR" id="Q01460"/>
<dbReference type="FunCoup" id="Q01460">
    <property type="interactions" value="170"/>
</dbReference>
<dbReference type="STRING" id="10116.ENSRNOP00000020972"/>
<dbReference type="CAZy" id="GH18">
    <property type="family name" value="Glycoside Hydrolase Family 18"/>
</dbReference>
<dbReference type="GlyCosmos" id="Q01460">
    <property type="glycosylation" value="4 sites, No reported glycans"/>
</dbReference>
<dbReference type="GlyGen" id="Q01460">
    <property type="glycosylation" value="4 sites"/>
</dbReference>
<dbReference type="PhosphoSitePlus" id="Q01460"/>
<dbReference type="PaxDb" id="10116-ENSRNOP00000020972"/>
<dbReference type="Ensembl" id="ENSRNOT00000020972.5">
    <property type="protein sequence ID" value="ENSRNOP00000020972.2"/>
    <property type="gene ID" value="ENSRNOG00000015573.6"/>
</dbReference>
<dbReference type="GeneID" id="81652"/>
<dbReference type="KEGG" id="rno:81652"/>
<dbReference type="AGR" id="RGD:621338"/>
<dbReference type="CTD" id="1486"/>
<dbReference type="RGD" id="621338">
    <property type="gene designation" value="Ctbs"/>
</dbReference>
<dbReference type="eggNOG" id="KOG2806">
    <property type="taxonomic scope" value="Eukaryota"/>
</dbReference>
<dbReference type="GeneTree" id="ENSGT00390000012891"/>
<dbReference type="HOGENOM" id="CLU_061189_1_0_1"/>
<dbReference type="InParanoid" id="Q01460"/>
<dbReference type="OMA" id="KWIMKQV"/>
<dbReference type="OrthoDB" id="73875at2759"/>
<dbReference type="PhylomeDB" id="Q01460"/>
<dbReference type="TreeFam" id="TF332677"/>
<dbReference type="PRO" id="PR:Q01460"/>
<dbReference type="Proteomes" id="UP000002494">
    <property type="component" value="Chromosome 2"/>
</dbReference>
<dbReference type="Bgee" id="ENSRNOG00000015573">
    <property type="expression patterns" value="Expressed in thymus and 20 other cell types or tissues"/>
</dbReference>
<dbReference type="GO" id="GO:0005764">
    <property type="term" value="C:lysosome"/>
    <property type="evidence" value="ECO:0007669"/>
    <property type="project" value="UniProtKB-SubCell"/>
</dbReference>
<dbReference type="GO" id="GO:0008061">
    <property type="term" value="F:chitin binding"/>
    <property type="evidence" value="ECO:0007669"/>
    <property type="project" value="InterPro"/>
</dbReference>
<dbReference type="GO" id="GO:0004568">
    <property type="term" value="F:chitinase activity"/>
    <property type="evidence" value="ECO:0000314"/>
    <property type="project" value="RGD"/>
</dbReference>
<dbReference type="GO" id="GO:0016798">
    <property type="term" value="F:hydrolase activity, acting on glycosyl bonds"/>
    <property type="evidence" value="ECO:0000304"/>
    <property type="project" value="RGD"/>
</dbReference>
<dbReference type="GO" id="GO:0006032">
    <property type="term" value="P:chitin catabolic process"/>
    <property type="evidence" value="ECO:0000314"/>
    <property type="project" value="RGD"/>
</dbReference>
<dbReference type="GO" id="GO:0009313">
    <property type="term" value="P:oligosaccharide catabolic process"/>
    <property type="evidence" value="ECO:0000314"/>
    <property type="project" value="RGD"/>
</dbReference>
<dbReference type="CDD" id="cd02875">
    <property type="entry name" value="GH18_chitobiase"/>
    <property type="match status" value="1"/>
</dbReference>
<dbReference type="FunFam" id="3.10.50.10:FF:000006">
    <property type="entry name" value="Chitobiase, di-N-acetyl"/>
    <property type="match status" value="1"/>
</dbReference>
<dbReference type="FunFam" id="3.20.20.80:FF:000250">
    <property type="entry name" value="Probable di-N-acetylchitobiase 1"/>
    <property type="match status" value="1"/>
</dbReference>
<dbReference type="Gene3D" id="3.10.50.10">
    <property type="match status" value="1"/>
</dbReference>
<dbReference type="Gene3D" id="3.20.20.80">
    <property type="entry name" value="Glycosidases"/>
    <property type="match status" value="1"/>
</dbReference>
<dbReference type="InterPro" id="IPR011583">
    <property type="entry name" value="Chitinase_II/V-like_cat"/>
</dbReference>
<dbReference type="InterPro" id="IPR029070">
    <property type="entry name" value="Chitinase_insertion_sf"/>
</dbReference>
<dbReference type="InterPro" id="IPR047898">
    <property type="entry name" value="DIAC_cat"/>
</dbReference>
<dbReference type="InterPro" id="IPR051887">
    <property type="entry name" value="GH18_Domain-Containing"/>
</dbReference>
<dbReference type="InterPro" id="IPR001223">
    <property type="entry name" value="Glyco_hydro18_cat"/>
</dbReference>
<dbReference type="InterPro" id="IPR001579">
    <property type="entry name" value="Glyco_hydro_18_chit_AS"/>
</dbReference>
<dbReference type="InterPro" id="IPR017853">
    <property type="entry name" value="Glycoside_hydrolase_SF"/>
</dbReference>
<dbReference type="PANTHER" id="PTHR46290">
    <property type="entry name" value="DI-N-ACETYLCHITOBIASE"/>
    <property type="match status" value="1"/>
</dbReference>
<dbReference type="PANTHER" id="PTHR46290:SF1">
    <property type="entry name" value="DI-N-ACETYLCHITOBIASE"/>
    <property type="match status" value="1"/>
</dbReference>
<dbReference type="Pfam" id="PF00704">
    <property type="entry name" value="Glyco_hydro_18"/>
    <property type="match status" value="1"/>
</dbReference>
<dbReference type="SMART" id="SM00636">
    <property type="entry name" value="Glyco_18"/>
    <property type="match status" value="1"/>
</dbReference>
<dbReference type="SUPFAM" id="SSF51445">
    <property type="entry name" value="(Trans)glycosidases"/>
    <property type="match status" value="1"/>
</dbReference>
<dbReference type="PROSITE" id="PS01095">
    <property type="entry name" value="GH18_1"/>
    <property type="match status" value="1"/>
</dbReference>
<dbReference type="PROSITE" id="PS51910">
    <property type="entry name" value="GH18_2"/>
    <property type="match status" value="1"/>
</dbReference>
<proteinExistence type="evidence at protein level"/>
<sequence>MALSDLLELTLLLLLPLLERLSAEDCPCSEASLCRPIRHHRDFEVFVFDVGQKTWKSYDWSQITTVAVFGKYDSELMCYAHSKGARVVLKGDVALKDIINPTFRASWIAQKVALAKAQHMDGINIDIEQEVDCSSPEYEALTALVRETTEGFHREIEGSQVTFDVAWSPKGIDKRCYNYTGIADACDFLFVMSYDEQSQIWSECIAAANAPYNQTLTGYGDYLRMGISPRKLVMGIPWYGYDYICLNLSKDDVCAIAKVPFRGAPCSDAAGHQVPYRVIMKQVNSSVSGSQWNQDQQAPYYNYKDPTGRLHQVWYDNPRSISLKAAFVKHYGLRGIGMWNANCLDYSDDALAREQTEEMWGALRPRL</sequence>
<comment type="function">
    <text>Involved in the degradation of asparagine-linked glycoproteins. Hydrolyze of N-acetyl-beta-D-glucosamine (1-4)N-acetylglucosamine chitobiose core from the reducing end of the bond, it requires prior cleavage by glycosylasparaginase.</text>
</comment>
<comment type="subcellular location">
    <subcellularLocation>
        <location>Lysosome</location>
    </subcellularLocation>
</comment>
<comment type="similarity">
    <text evidence="4">Belongs to the glycosyl hydrolase 18 family.</text>
</comment>
<organism>
    <name type="scientific">Rattus norvegicus</name>
    <name type="common">Rat</name>
    <dbReference type="NCBI Taxonomy" id="10116"/>
    <lineage>
        <taxon>Eukaryota</taxon>
        <taxon>Metazoa</taxon>
        <taxon>Chordata</taxon>
        <taxon>Craniata</taxon>
        <taxon>Vertebrata</taxon>
        <taxon>Euteleostomi</taxon>
        <taxon>Mammalia</taxon>
        <taxon>Eutheria</taxon>
        <taxon>Euarchontoglires</taxon>
        <taxon>Glires</taxon>
        <taxon>Rodentia</taxon>
        <taxon>Myomorpha</taxon>
        <taxon>Muroidea</taxon>
        <taxon>Muridae</taxon>
        <taxon>Murinae</taxon>
        <taxon>Rattus</taxon>
    </lineage>
</organism>
<protein>
    <recommendedName>
        <fullName>Di-N-acetylchitobiase</fullName>
        <ecNumber>3.2.1.-</ecNumber>
    </recommendedName>
</protein>
<evidence type="ECO:0000255" key="1"/>
<evidence type="ECO:0000255" key="2">
    <source>
        <dbReference type="PROSITE-ProRule" id="PRU01258"/>
    </source>
</evidence>
<evidence type="ECO:0000269" key="3">
    <source>
    </source>
</evidence>
<evidence type="ECO:0000305" key="4"/>
<keyword id="KW-0903">Direct protein sequencing</keyword>
<keyword id="KW-0325">Glycoprotein</keyword>
<keyword id="KW-0326">Glycosidase</keyword>
<keyword id="KW-0378">Hydrolase</keyword>
<keyword id="KW-0458">Lysosome</keyword>
<keyword id="KW-1185">Reference proteome</keyword>
<keyword id="KW-0732">Signal</keyword>
<gene>
    <name type="primary">Ctbs</name>
    <name type="synonym">Ctb</name>
</gene>
<name>DIAC_RAT</name>
<accession>Q01460</accession>
<reference key="1">
    <citation type="journal article" date="1992" name="J. Biol. Chem.">
        <title>Cloning and expression of the cDNA sequence encoding the lysosomal glycosidase di-N-acetylchitobiase.</title>
        <authorList>
            <person name="Fisher K.J."/>
            <person name="Aronson N.N. Jr."/>
        </authorList>
    </citation>
    <scope>NUCLEOTIDE SEQUENCE [MRNA]</scope>
    <scope>PROTEIN SEQUENCE OF 24-32</scope>
    <source>
        <tissue>Liver</tissue>
    </source>
</reference>
<reference key="2">
    <citation type="journal article" date="2004" name="Genome Res.">
        <title>The status, quality, and expansion of the NIH full-length cDNA project: the Mammalian Gene Collection (MGC).</title>
        <authorList>
            <consortium name="The MGC Project Team"/>
        </authorList>
    </citation>
    <scope>NUCLEOTIDE SEQUENCE [LARGE SCALE MRNA]</scope>
    <source>
        <tissue>Liver</tissue>
    </source>
</reference>